<keyword id="KW-0009">Actin-binding</keyword>
<keyword id="KW-0963">Cytoplasm</keyword>
<keyword id="KW-0206">Cytoskeleton</keyword>
<keyword id="KW-0472">Membrane</keyword>
<keyword id="KW-0488">Methylation</keyword>
<keyword id="KW-0597">Phosphoprotein</keyword>
<keyword id="KW-1185">Reference proteome</keyword>
<keyword id="KW-0677">Repeat</keyword>
<keyword id="KW-0832">Ubl conjugation</keyword>
<accession>D3ZHA0</accession>
<comment type="function">
    <text evidence="2">Muscle-specific filamin, which plays a central role in sarcomere assembly and organization. Critical for normal myogenesis, it probably functions as a large actin-cross-linking protein with structural functions at the Z lines in muscle cells. May be involved in reorganizing the actin cytoskeleton in response to signaling events.</text>
</comment>
<comment type="subunit">
    <text evidence="1 2 7">Homodimer; the filamin repeat 24 and the second hinge domain are important for dimer formation (By similarity). Interacts with FLNB, KCND2, INPPL1, ITGB1A, MYOT, MYOZ1 and MYOZ3 (By similarity). Interacts with sarcoglycans SGCD and SGCG (By similarity). Interacts (via filament repeats 17-18, 20-21 and 24) with USP25 (isoform USP25m only) (By similarity). Interacts with FBLIM1 (By similarity). Interacts with KY (By similarity). Interacts with IGFN1 (By similarity). Interacts with MICALL2 (By similarity). Interacts with XIRP1; this interaction is mediated by filamin 20 repeat (By similarity). Interacts with ANK3. Interacts with SYNPO2 (By similarity).</text>
</comment>
<comment type="subcellular location">
    <subcellularLocation>
        <location evidence="1">Cytoplasm</location>
    </subcellularLocation>
    <subcellularLocation>
        <location evidence="1">Membrane</location>
        <topology evidence="1">Peripheral membrane protein</topology>
    </subcellularLocation>
    <subcellularLocation>
        <location evidence="1">Cytoplasm</location>
        <location evidence="1">Cytoskeleton</location>
    </subcellularLocation>
    <subcellularLocation>
        <location evidence="1">Cytoplasm</location>
        <location evidence="1">Myofibril</location>
        <location evidence="1">Sarcomere</location>
        <location evidence="1">Z line</location>
    </subcellularLocation>
    <text evidence="1">A small amount localizes at membranes. In striated muscle cells, it predominantly localizes in myofibrillar Z lines, while a minor fraction localizes with subsarcolemme. Targeting to developing and mature Z lines is mediated by the intradomain insert (By similarity).</text>
</comment>
<comment type="PTM">
    <text evidence="1">Ubiquitinated by FBXL22, leading to proteasomal degradation.</text>
</comment>
<comment type="similarity">
    <text evidence="8">Belongs to the filamin family.</text>
</comment>
<protein>
    <recommendedName>
        <fullName>Filamin-C</fullName>
        <shortName>FLN-C</shortName>
    </recommendedName>
    <alternativeName>
        <fullName>ABP-280-like protein</fullName>
    </alternativeName>
    <alternativeName>
        <fullName>ABP-L</fullName>
    </alternativeName>
    <alternativeName>
        <fullName>Actin-binding-like protein</fullName>
    </alternativeName>
    <alternativeName>
        <fullName>Filamin-2</fullName>
    </alternativeName>
    <alternativeName>
        <fullName>Gamma-filamin</fullName>
    </alternativeName>
</protein>
<sequence length="2726" mass="290986">MMNNSNYSDASGLGLLDEADEMPSTEKDLAEDAPWKKIQQNTFTRWCNEHLKCVGKRLTDLQRDLSDGLRLIALLEVLSQKRMYRKFHPRPNFRQMKLENVSVALEFLEREHIKLVSIDSKAIVDGNLKLILGLIWTLILHYSISMPMWEDEDDEDARKQTPKQRLLGWIQNKVPQLPITNFNRDWQDGKALGALVDNCAPGLCPDWEAWDPNQPVQNAREAMQQADDWLGVPQVIAPEEIVDPNVDEHSVMTYLSQFPKAKLKPGAPVRSKQLNPKKAIAYGPGIEPQGNTVLQPAHFTVQTVDAGVGEVLVYIEDPEGHTEEAKVVPNNDKDRTYAVSYVPKVAGLHKVTVLFAGQNIERSPFEVNVGMALGDANKVSARGPGLEPVGNVANKPTYFDIYTAGAGTGDVAVVIVDPQGRRDTVEVALEDKGDNTFRCTYRPVMEGPHTVHVAFAGAPITRSPFPVHVAEACNPNACRASGRGLQPKGVRVKEVADFKVFTKGAGSGELKVTVKGPKGTEEPVKVREAGDGVFECEYYPVIPGKYVVTITWGGYAIPRSPFEVQVSPEAGAQKVRAWGPGLETGQVGKSADFVVEAIGTEVGTLGFSIEGPSQAKIECDDRGDGSCDVRYWPTEPGEYAVHVICDDEDIRDSPFIAHIQPAPPDCFPDKVKAFGPGLEPTGCIVDRPAEFTIDARAAGKGDLKLYAQDADGCPIDIKVIPNGDGTFRCSYVPTKPIKHTVIISWGGVNVPKSPFRVNVGEGSHPERVKVYGPGVEKTGLKANEPTYFTVDCSEAGQGDVSIGIKCAPGVVGPAEADIDFDIIKNDNDTFTVKYTPPGAGHYTIMVLFANQEIPASPFHIKVDPSHDASKVKAEGPGLSRTGVEVGKPTHFTVLTKGAGKAKLDVHFAGAAKGEAVRDFEIIDNHDYSYTVKYTAVQQGNMAVTVTYGGDPVPKSPFVVNVAPPLDLSKVKVQGLNSKVAVGEEQAFLVNTRGAGGQGQLDVRMTSPSRRPIPCKLEPGSGAEAQAVRYMPPEEGPYKVDITYDGHPVPGSPFAVEGVLPPDPSKVCAYGPGLKGGLVGTPAPFSIDTKGAGTGGLGLTVEGPCEAKIECQDNGDGSCAVSYLPTEPGEYTINILFAEAHIPGSPFKATIQPVFDPSKVRASGPGLERGKAGEAATFTVDCSEAGEAELTIEILSDAGVKAEVLIHNNADGTYHITYSPAFPGTYTITIKYGGHPIPKFPTRVHVQPAVDTSGIKVSGPGVEPHGVLREVTTEFTVDARSLTATGGNHVTARVLNPSGAKTDTYVTDNGDGTYRVQYTAYEEGVHLVEVLYDEVAVPKSPFRVGVTEGCDPTRVRAFGPGLEGGLVNKANRFTVETRGAGTGGLGLAIEGPSEAKMSCKDNKDGSCTVEYVPFTPGDYDVNITFGGQPIPGSPFRVPVKDVVDPGKVKCSGPGLGTGVRARVPQTFTVDCSQAGRAPLQVAVLGPTGVAEPVEVRDNGDGTHTVHYTPATDGPYTVAVKYADQEVPRSPFKIKVLPAHDASKVRASGPGLNASGIPASLPVEFTIDARDAGEGLLTVQILDPEGKPKKANIRDNGDGTYTVSYLPDMSGRYTITIKYGGDEIPYSPFRIHALPTGDASKCLVTVSIGGHGLGACLGPRIQIGEETVITVDAKAAGKGKVTCTVSTPDGAELDVDVVENHDGTFDIYYTAPEPGKYVITIRFGGEHIPNSPFHVLACDPLPHVEEPAEVLQLHQPYAPLRPGTCPTHWATEEPVVPVEPLESMLRPFNLVIPFTVQKGELTGEVRMPSGKTARPNITDNKDGTITVRYAPTEKGLHQMGIKYDGNHIPGSPLQFYVDAINSGHVSAYGPGLSHGMVNKPATFTIVTKDAGEGGLSLAVEGPSKAEITCKDNKDGTCTVSYLPTAPGDYSIIVRFDDKHIPGSPFTAKITGDDSMRTSQLNVGTSTDVSLKITEGDLSQLTASIRAPSGNEEPCLLKRLPNRHIGISFTPKEVGEHVVSVRKSGKHVTNSPFKILVGPSEIGDASKVRVWGKGLSEGQTFQVAEFIVDTRNAGYGGLGLSIEGPSKVDINCEDMEDGTCKVTYCPTEPGTYIINIKFADKHVPGSPFTVKVTGEGRMKESITRRRQAPSIATIGSTCDLNLKIPGNWFQMVSAQERLTRTFTRSSHTYTRTERTEISKTRGGETKREVRVEESTQVGGDPFPAVFGDFLGRERLGSFGSITRQQEGEASSQDMTAQVTSPSGKTEAAEIVEGEDSAYSVRFVPQEMGPHTVAVKYRGQHVPGSPFQFTVGPLGEGGAHKVRAGGTGLERGVAGVPAEFSIWTREAGAGGLSIAVEGPSKAEIAFEDRKDGSCGVSYVVQEPGDYEVSIKFNDEHIPDSPFVVPVASLSDDARRLTVTSLQETGLKVNQPASFAVQLNGARGVIDARVHTPSGAVEECYVSELDSDKHTIRFIPHENGVHSIDVKFNGAHIPGSPFKIRVGEQSQAGDPGLVSAYGPGLEGGTTGVSSEFIVNTQNAGSGALSVTIDGPSKVQLDCRECPEGHVVTYTPMAPGNYLIAIKYGGPQHIVGSPFKAKVTGPRLSGGHSLHETSTVLVETVTKSSSSRGASYSSIPKFSSDASKVVTRGPGLSQAFVGQKNSFTVDCSKAGTNMMMVGVHGPKTPCEEVYVKHMGNRVYNVTYTVKEKGDYILIVKWGDESVPGSPFKVNVP</sequence>
<dbReference type="EMBL" id="AABR06030202">
    <property type="status" value="NOT_ANNOTATED_CDS"/>
    <property type="molecule type" value="Genomic_DNA"/>
</dbReference>
<dbReference type="RefSeq" id="NP_001178791.1">
    <property type="nucleotide sequence ID" value="NM_001191862.1"/>
</dbReference>
<dbReference type="SMR" id="D3ZHA0"/>
<dbReference type="BioGRID" id="263368">
    <property type="interactions" value="3"/>
</dbReference>
<dbReference type="FunCoup" id="D3ZHA0">
    <property type="interactions" value="866"/>
</dbReference>
<dbReference type="IntAct" id="D3ZHA0">
    <property type="interactions" value="4"/>
</dbReference>
<dbReference type="STRING" id="10116.ENSRNOP00000070379"/>
<dbReference type="GlyGen" id="D3ZHA0">
    <property type="glycosylation" value="1 site"/>
</dbReference>
<dbReference type="iPTMnet" id="D3ZHA0"/>
<dbReference type="PhosphoSitePlus" id="D3ZHA0"/>
<dbReference type="jPOST" id="D3ZHA0"/>
<dbReference type="PaxDb" id="10116-ENSRNOP00000027237"/>
<dbReference type="PeptideAtlas" id="D3ZHA0"/>
<dbReference type="Ensembl" id="ENSRNOT00000027237.8">
    <property type="protein sequence ID" value="ENSRNOP00000027237.7"/>
    <property type="gene ID" value="ENSRNOG00000007281.8"/>
</dbReference>
<dbReference type="GeneID" id="362332"/>
<dbReference type="KEGG" id="rno:362332"/>
<dbReference type="AGR" id="RGD:1308807"/>
<dbReference type="CTD" id="2318"/>
<dbReference type="RGD" id="1308807">
    <property type="gene designation" value="Flnc"/>
</dbReference>
<dbReference type="eggNOG" id="KOG0518">
    <property type="taxonomic scope" value="Eukaryota"/>
</dbReference>
<dbReference type="GeneTree" id="ENSGT00940000153588"/>
<dbReference type="HOGENOM" id="CLU_000783_0_0_1"/>
<dbReference type="InParanoid" id="D3ZHA0"/>
<dbReference type="OMA" id="YPVMAGK"/>
<dbReference type="OrthoDB" id="5334309at2759"/>
<dbReference type="TreeFam" id="TF313685"/>
<dbReference type="Reactome" id="R-RNO-446353">
    <property type="pathway name" value="Cell-extracellular matrix interactions"/>
</dbReference>
<dbReference type="PRO" id="PR:D3ZHA0"/>
<dbReference type="Proteomes" id="UP000002494">
    <property type="component" value="Chromosome 4"/>
</dbReference>
<dbReference type="Bgee" id="ENSRNOG00000007281">
    <property type="expression patterns" value="Expressed in skeletal muscle tissue and 14 other cell types or tissues"/>
</dbReference>
<dbReference type="ExpressionAtlas" id="D3ZHA0">
    <property type="expression patterns" value="baseline and differential"/>
</dbReference>
<dbReference type="GO" id="GO:0043034">
    <property type="term" value="C:costamere"/>
    <property type="evidence" value="ECO:0000304"/>
    <property type="project" value="BHF-UCL"/>
</dbReference>
<dbReference type="GO" id="GO:0005737">
    <property type="term" value="C:cytoplasm"/>
    <property type="evidence" value="ECO:0000266"/>
    <property type="project" value="RGD"/>
</dbReference>
<dbReference type="GO" id="GO:0005856">
    <property type="term" value="C:cytoskeleton"/>
    <property type="evidence" value="ECO:0007669"/>
    <property type="project" value="UniProtKB-SubCell"/>
</dbReference>
<dbReference type="GO" id="GO:0005829">
    <property type="term" value="C:cytosol"/>
    <property type="evidence" value="ECO:0007669"/>
    <property type="project" value="Ensembl"/>
</dbReference>
<dbReference type="GO" id="GO:0045171">
    <property type="term" value="C:intercellular bridge"/>
    <property type="evidence" value="ECO:0007669"/>
    <property type="project" value="Ensembl"/>
</dbReference>
<dbReference type="GO" id="GO:0042383">
    <property type="term" value="C:sarcolemma"/>
    <property type="evidence" value="ECO:0000314"/>
    <property type="project" value="BHF-UCL"/>
</dbReference>
<dbReference type="GO" id="GO:0016528">
    <property type="term" value="C:sarcoplasm"/>
    <property type="evidence" value="ECO:0000314"/>
    <property type="project" value="BHF-UCL"/>
</dbReference>
<dbReference type="GO" id="GO:0030018">
    <property type="term" value="C:Z disc"/>
    <property type="evidence" value="ECO:0007669"/>
    <property type="project" value="UniProtKB-SubCell"/>
</dbReference>
<dbReference type="GO" id="GO:0051015">
    <property type="term" value="F:actin filament binding"/>
    <property type="evidence" value="ECO:0007669"/>
    <property type="project" value="InterPro"/>
</dbReference>
<dbReference type="GO" id="GO:0030506">
    <property type="term" value="F:ankyrin binding"/>
    <property type="evidence" value="ECO:0000353"/>
    <property type="project" value="BHF-UCL"/>
</dbReference>
<dbReference type="GO" id="GO:0008092">
    <property type="term" value="F:cytoskeletal protein binding"/>
    <property type="evidence" value="ECO:0000266"/>
    <property type="project" value="RGD"/>
</dbReference>
<dbReference type="GO" id="GO:0055001">
    <property type="term" value="P:muscle cell development"/>
    <property type="evidence" value="ECO:0000266"/>
    <property type="project" value="RGD"/>
</dbReference>
<dbReference type="GO" id="GO:0045214">
    <property type="term" value="P:sarcomere organization"/>
    <property type="evidence" value="ECO:0000250"/>
    <property type="project" value="UniProtKB"/>
</dbReference>
<dbReference type="CDD" id="cd21310">
    <property type="entry name" value="CH_FLNC_rpt1"/>
    <property type="match status" value="1"/>
</dbReference>
<dbReference type="CDD" id="cd21314">
    <property type="entry name" value="CH_FLNC_rpt2"/>
    <property type="match status" value="1"/>
</dbReference>
<dbReference type="FunFam" id="1.10.418.10:FF:000006">
    <property type="entry name" value="Filamin-B isoform A"/>
    <property type="match status" value="1"/>
</dbReference>
<dbReference type="FunFam" id="2.60.40.10:FF:000042">
    <property type="entry name" value="Filamin-B isoform B"/>
    <property type="match status" value="2"/>
</dbReference>
<dbReference type="FunFam" id="2.60.40.10:FF:000092">
    <property type="entry name" value="Filamin-B isoform B"/>
    <property type="match status" value="1"/>
</dbReference>
<dbReference type="FunFam" id="1.10.418.10:FF:000008">
    <property type="entry name" value="Filamin-B isoform C"/>
    <property type="match status" value="1"/>
</dbReference>
<dbReference type="FunFam" id="2.60.40.10:FF:000007">
    <property type="entry name" value="Filamin-B isoform C"/>
    <property type="match status" value="3"/>
</dbReference>
<dbReference type="FunFam" id="2.60.40.10:FF:000079">
    <property type="entry name" value="Filamin-B isoform C"/>
    <property type="match status" value="1"/>
</dbReference>
<dbReference type="FunFam" id="2.60.40.10:FF:000125">
    <property type="entry name" value="filamin-B isoform X1"/>
    <property type="match status" value="1"/>
</dbReference>
<dbReference type="FunFam" id="2.60.40.10:FF:000138">
    <property type="entry name" value="filamin-B isoform X1"/>
    <property type="match status" value="1"/>
</dbReference>
<dbReference type="FunFam" id="2.60.40.10:FF:000154">
    <property type="entry name" value="filamin-B isoform X1"/>
    <property type="match status" value="1"/>
</dbReference>
<dbReference type="FunFam" id="2.60.40.10:FF:000102">
    <property type="entry name" value="filamin-B isoform X2"/>
    <property type="match status" value="1"/>
</dbReference>
<dbReference type="FunFam" id="2.60.40.10:FF:000001">
    <property type="entry name" value="Filamin-C isoform b"/>
    <property type="match status" value="5"/>
</dbReference>
<dbReference type="FunFam" id="2.60.40.10:FF:000105">
    <property type="entry name" value="filamin-C isoform X1"/>
    <property type="match status" value="1"/>
</dbReference>
<dbReference type="FunFam" id="2.60.40.10:FF:000115">
    <property type="entry name" value="filamin-C isoform X1"/>
    <property type="match status" value="1"/>
</dbReference>
<dbReference type="FunFam" id="2.60.40.10:FF:000126">
    <property type="entry name" value="filamin-C isoform X1"/>
    <property type="match status" value="1"/>
</dbReference>
<dbReference type="FunFam" id="2.60.40.10:FF:000157">
    <property type="entry name" value="filamin-C isoform X1"/>
    <property type="match status" value="1"/>
</dbReference>
<dbReference type="FunFam" id="2.60.40.10:FF:000096">
    <property type="entry name" value="filamin-C isoform X2"/>
    <property type="match status" value="1"/>
</dbReference>
<dbReference type="FunFam" id="2.60.40.10:FF:000118">
    <property type="entry name" value="filamin-C isoform X2"/>
    <property type="match status" value="1"/>
</dbReference>
<dbReference type="FunFam" id="2.60.40.10:FF:000122">
    <property type="entry name" value="filamin-C isoform X2"/>
    <property type="match status" value="1"/>
</dbReference>
<dbReference type="FunFam" id="2.60.40.10:FF:000168">
    <property type="entry name" value="filamin-C isoform X2"/>
    <property type="match status" value="1"/>
</dbReference>
<dbReference type="Gene3D" id="1.10.418.10">
    <property type="entry name" value="Calponin-like domain"/>
    <property type="match status" value="2"/>
</dbReference>
<dbReference type="Gene3D" id="2.60.40.10">
    <property type="entry name" value="Immunoglobulins"/>
    <property type="match status" value="24"/>
</dbReference>
<dbReference type="InterPro" id="IPR001589">
    <property type="entry name" value="Actinin_actin-bd_CS"/>
</dbReference>
<dbReference type="InterPro" id="IPR001715">
    <property type="entry name" value="CH_dom"/>
</dbReference>
<dbReference type="InterPro" id="IPR036872">
    <property type="entry name" value="CH_dom_sf"/>
</dbReference>
<dbReference type="InterPro" id="IPR044801">
    <property type="entry name" value="Filamin"/>
</dbReference>
<dbReference type="InterPro" id="IPR017868">
    <property type="entry name" value="Filamin/ABP280_repeat-like"/>
</dbReference>
<dbReference type="InterPro" id="IPR001298">
    <property type="entry name" value="Filamin/ABP280_rpt"/>
</dbReference>
<dbReference type="InterPro" id="IPR013783">
    <property type="entry name" value="Ig-like_fold"/>
</dbReference>
<dbReference type="InterPro" id="IPR014756">
    <property type="entry name" value="Ig_E-set"/>
</dbReference>
<dbReference type="PANTHER" id="PTHR38537:SF8">
    <property type="entry name" value="FILAMIN-A"/>
    <property type="match status" value="1"/>
</dbReference>
<dbReference type="PANTHER" id="PTHR38537">
    <property type="entry name" value="JITTERBUG, ISOFORM N"/>
    <property type="match status" value="1"/>
</dbReference>
<dbReference type="Pfam" id="PF00307">
    <property type="entry name" value="CH"/>
    <property type="match status" value="2"/>
</dbReference>
<dbReference type="Pfam" id="PF00630">
    <property type="entry name" value="Filamin"/>
    <property type="match status" value="24"/>
</dbReference>
<dbReference type="SMART" id="SM00033">
    <property type="entry name" value="CH"/>
    <property type="match status" value="2"/>
</dbReference>
<dbReference type="SMART" id="SM00557">
    <property type="entry name" value="IG_FLMN"/>
    <property type="match status" value="24"/>
</dbReference>
<dbReference type="SUPFAM" id="SSF47576">
    <property type="entry name" value="Calponin-homology domain, CH-domain"/>
    <property type="match status" value="1"/>
</dbReference>
<dbReference type="SUPFAM" id="SSF81296">
    <property type="entry name" value="E set domains"/>
    <property type="match status" value="24"/>
</dbReference>
<dbReference type="PROSITE" id="PS00019">
    <property type="entry name" value="ACTININ_1"/>
    <property type="match status" value="1"/>
</dbReference>
<dbReference type="PROSITE" id="PS00020">
    <property type="entry name" value="ACTININ_2"/>
    <property type="match status" value="1"/>
</dbReference>
<dbReference type="PROSITE" id="PS50021">
    <property type="entry name" value="CH"/>
    <property type="match status" value="2"/>
</dbReference>
<dbReference type="PROSITE" id="PS50194">
    <property type="entry name" value="FILAMIN_REPEAT"/>
    <property type="match status" value="24"/>
</dbReference>
<feature type="chain" id="PRO_0000429633" description="Filamin-C">
    <location>
        <begin position="1"/>
        <end position="2726"/>
    </location>
</feature>
<feature type="domain" description="Calponin-homology (CH) 1" evidence="4">
    <location>
        <begin position="37"/>
        <end position="143"/>
    </location>
</feature>
<feature type="domain" description="Calponin-homology (CH) 2" evidence="4">
    <location>
        <begin position="160"/>
        <end position="263"/>
    </location>
</feature>
<feature type="repeat" description="Filamin 1">
    <location>
        <begin position="271"/>
        <end position="369"/>
    </location>
</feature>
<feature type="repeat" description="Filamin 2">
    <location>
        <begin position="371"/>
        <end position="469"/>
    </location>
</feature>
<feature type="repeat" description="Filamin 3">
    <location>
        <begin position="470"/>
        <end position="566"/>
    </location>
</feature>
<feature type="repeat" description="Filamin 4">
    <location>
        <begin position="567"/>
        <end position="659"/>
    </location>
</feature>
<feature type="repeat" description="Filamin 5">
    <location>
        <begin position="663"/>
        <end position="759"/>
    </location>
</feature>
<feature type="repeat" description="Filamin 6">
    <location>
        <begin position="760"/>
        <end position="862"/>
    </location>
</feature>
<feature type="repeat" description="Filamin 7">
    <location>
        <begin position="863"/>
        <end position="961"/>
    </location>
</feature>
<feature type="repeat" description="Filamin 8">
    <location>
        <begin position="962"/>
        <end position="1057"/>
    </location>
</feature>
<feature type="repeat" description="Filamin 9">
    <location>
        <begin position="1058"/>
        <end position="1150"/>
    </location>
</feature>
<feature type="repeat" description="Filamin 10">
    <location>
        <begin position="1151"/>
        <end position="1245"/>
    </location>
</feature>
<feature type="repeat" description="Filamin 11">
    <location>
        <begin position="1246"/>
        <end position="1345"/>
    </location>
</feature>
<feature type="repeat" description="Filamin 12">
    <location>
        <begin position="1346"/>
        <end position="1438"/>
    </location>
</feature>
<feature type="repeat" description="Filamin 13">
    <location>
        <begin position="1439"/>
        <end position="1534"/>
    </location>
</feature>
<feature type="repeat" description="Filamin 14">
    <location>
        <begin position="1535"/>
        <end position="1631"/>
    </location>
</feature>
<feature type="repeat" description="Filamin 15">
    <location>
        <begin position="1636"/>
        <end position="1735"/>
    </location>
</feature>
<feature type="repeat" description="Filamin 16">
    <location>
        <begin position="1760"/>
        <end position="1854"/>
    </location>
</feature>
<feature type="repeat" description="Filamin 17">
    <location>
        <begin position="1855"/>
        <end position="1947"/>
    </location>
</feature>
<feature type="repeat" description="Filamin 18">
    <location>
        <begin position="1948"/>
        <end position="2034"/>
    </location>
</feature>
<feature type="repeat" description="Filamin 19">
    <location>
        <begin position="2037"/>
        <end position="2129"/>
    </location>
</feature>
<feature type="repeat" description="Filamin 20; mediates interaction with XIRP1" evidence="5">
    <location>
        <begin position="2245"/>
        <end position="2307"/>
    </location>
</feature>
<feature type="repeat" description="Filamin 21">
    <location>
        <begin position="2310"/>
        <end position="2402"/>
    </location>
</feature>
<feature type="repeat" description="Filamin 22">
    <location>
        <begin position="2404"/>
        <end position="2497"/>
    </location>
</feature>
<feature type="repeat" description="Filamin 23">
    <location>
        <begin position="2501"/>
        <end position="2593"/>
    </location>
</feature>
<feature type="repeat" description="Filamin 24">
    <location>
        <begin position="2631"/>
        <end position="2725"/>
    </location>
</feature>
<feature type="region of interest" description="Actin-binding">
    <location>
        <begin position="1"/>
        <end position="260"/>
    </location>
</feature>
<feature type="region of interest" description="Hinge 1">
    <location>
        <begin position="1736"/>
        <end position="1759"/>
    </location>
</feature>
<feature type="region of interest" description="Intradomain insert; mediate targeting to Z lines" evidence="1">
    <location>
        <begin position="2163"/>
        <end position="2244"/>
    </location>
</feature>
<feature type="region of interest" description="Disordered" evidence="6">
    <location>
        <begin position="2194"/>
        <end position="2214"/>
    </location>
</feature>
<feature type="region of interest" description="Disordered" evidence="6">
    <location>
        <begin position="2241"/>
        <end position="2261"/>
    </location>
</feature>
<feature type="region of interest" description="Interaction with INPPL1" evidence="1">
    <location>
        <begin position="2404"/>
        <end position="2725"/>
    </location>
</feature>
<feature type="region of interest" description="Self-association site, tail" evidence="1">
    <location>
        <begin position="2594"/>
        <end position="2726"/>
    </location>
</feature>
<feature type="region of interest" description="Hinge 2">
    <location>
        <begin position="2594"/>
        <end position="2630"/>
    </location>
</feature>
<feature type="compositionally biased region" description="Basic and acidic residues" evidence="6">
    <location>
        <begin position="2194"/>
        <end position="2210"/>
    </location>
</feature>
<feature type="compositionally biased region" description="Polar residues" evidence="6">
    <location>
        <begin position="2241"/>
        <end position="2260"/>
    </location>
</feature>
<feature type="modified residue" description="Phosphoserine" evidence="2">
    <location>
        <position position="5"/>
    </location>
</feature>
<feature type="modified residue" description="Omega-N-methylarginine" evidence="3">
    <location>
        <position position="1003"/>
    </location>
</feature>
<feature type="modified residue" description="Phosphoserine" evidence="2">
    <location>
        <position position="1162"/>
    </location>
</feature>
<feature type="modified residue" description="Phosphoserine" evidence="2">
    <location>
        <position position="1339"/>
    </location>
</feature>
<feature type="modified residue" description="Phosphoserine" evidence="2">
    <location>
        <position position="2043"/>
    </location>
</feature>
<feature type="modified residue" description="Phosphoserine" evidence="9">
    <location>
        <position position="2234"/>
    </location>
</feature>
<feature type="modified residue" description="Phosphoserine" evidence="9">
    <location>
        <position position="2237"/>
    </location>
</feature>
<feature type="modified residue" description="Phosphothreonine" evidence="2">
    <location>
        <position position="2239"/>
    </location>
</feature>
<feature type="modified residue" description="Phosphoserine" evidence="2">
    <location>
        <position position="2587"/>
    </location>
</feature>
<feature type="modified residue" description="Phosphoserine" evidence="2">
    <location>
        <position position="2618"/>
    </location>
</feature>
<feature type="modified residue" description="Phosphoserine" evidence="2">
    <location>
        <position position="2621"/>
    </location>
</feature>
<feature type="modified residue" description="Phosphoserine" evidence="2">
    <location>
        <position position="2633"/>
    </location>
</feature>
<feature type="modified residue" description="Phosphoserine" evidence="2">
    <location>
        <position position="2715"/>
    </location>
</feature>
<feature type="modified residue" description="Phosphoserine" evidence="2">
    <location>
        <position position="2719"/>
    </location>
</feature>
<organism>
    <name type="scientific">Rattus norvegicus</name>
    <name type="common">Rat</name>
    <dbReference type="NCBI Taxonomy" id="10116"/>
    <lineage>
        <taxon>Eukaryota</taxon>
        <taxon>Metazoa</taxon>
        <taxon>Chordata</taxon>
        <taxon>Craniata</taxon>
        <taxon>Vertebrata</taxon>
        <taxon>Euteleostomi</taxon>
        <taxon>Mammalia</taxon>
        <taxon>Eutheria</taxon>
        <taxon>Euarchontoglires</taxon>
        <taxon>Glires</taxon>
        <taxon>Rodentia</taxon>
        <taxon>Myomorpha</taxon>
        <taxon>Muroidea</taxon>
        <taxon>Muridae</taxon>
        <taxon>Murinae</taxon>
        <taxon>Rattus</taxon>
    </lineage>
</organism>
<name>FLNC_RAT</name>
<gene>
    <name type="primary">Flnc</name>
    <name type="synonym">Abpl</name>
    <name type="synonym">Fln2</name>
</gene>
<evidence type="ECO:0000250" key="1"/>
<evidence type="ECO:0000250" key="2">
    <source>
        <dbReference type="UniProtKB" id="Q14315"/>
    </source>
</evidence>
<evidence type="ECO:0000250" key="3">
    <source>
        <dbReference type="UniProtKB" id="Q8VHX6"/>
    </source>
</evidence>
<evidence type="ECO:0000255" key="4">
    <source>
        <dbReference type="PROSITE-ProRule" id="PRU00044"/>
    </source>
</evidence>
<evidence type="ECO:0000255" key="5">
    <source>
        <dbReference type="PROSITE-ProRule" id="PRU00087"/>
    </source>
</evidence>
<evidence type="ECO:0000256" key="6">
    <source>
        <dbReference type="SAM" id="MobiDB-lite"/>
    </source>
</evidence>
<evidence type="ECO:0000269" key="7">
    <source>
    </source>
</evidence>
<evidence type="ECO:0000305" key="8"/>
<evidence type="ECO:0007744" key="9">
    <source>
    </source>
</evidence>
<proteinExistence type="evidence at protein level"/>
<reference key="1">
    <citation type="journal article" date="2004" name="Nature">
        <title>Genome sequence of the Brown Norway rat yields insights into mammalian evolution.</title>
        <authorList>
            <person name="Gibbs R.A."/>
            <person name="Weinstock G.M."/>
            <person name="Metzker M.L."/>
            <person name="Muzny D.M."/>
            <person name="Sodergren E.J."/>
            <person name="Scherer S."/>
            <person name="Scott G."/>
            <person name="Steffen D."/>
            <person name="Worley K.C."/>
            <person name="Burch P.E."/>
            <person name="Okwuonu G."/>
            <person name="Hines S."/>
            <person name="Lewis L."/>
            <person name="Deramo C."/>
            <person name="Delgado O."/>
            <person name="Dugan-Rocha S."/>
            <person name="Miner G."/>
            <person name="Morgan M."/>
            <person name="Hawes A."/>
            <person name="Gill R."/>
            <person name="Holt R.A."/>
            <person name="Adams M.D."/>
            <person name="Amanatides P.G."/>
            <person name="Baden-Tillson H."/>
            <person name="Barnstead M."/>
            <person name="Chin S."/>
            <person name="Evans C.A."/>
            <person name="Ferriera S."/>
            <person name="Fosler C."/>
            <person name="Glodek A."/>
            <person name="Gu Z."/>
            <person name="Jennings D."/>
            <person name="Kraft C.L."/>
            <person name="Nguyen T."/>
            <person name="Pfannkoch C.M."/>
            <person name="Sitter C."/>
            <person name="Sutton G.G."/>
            <person name="Venter J.C."/>
            <person name="Woodage T."/>
            <person name="Smith D."/>
            <person name="Lee H.-M."/>
            <person name="Gustafson E."/>
            <person name="Cahill P."/>
            <person name="Kana A."/>
            <person name="Doucette-Stamm L."/>
            <person name="Weinstock K."/>
            <person name="Fechtel K."/>
            <person name="Weiss R.B."/>
            <person name="Dunn D.M."/>
            <person name="Green E.D."/>
            <person name="Blakesley R.W."/>
            <person name="Bouffard G.G."/>
            <person name="De Jong P.J."/>
            <person name="Osoegawa K."/>
            <person name="Zhu B."/>
            <person name="Marra M."/>
            <person name="Schein J."/>
            <person name="Bosdet I."/>
            <person name="Fjell C."/>
            <person name="Jones S."/>
            <person name="Krzywinski M."/>
            <person name="Mathewson C."/>
            <person name="Siddiqui A."/>
            <person name="Wye N."/>
            <person name="McPherson J."/>
            <person name="Zhao S."/>
            <person name="Fraser C.M."/>
            <person name="Shetty J."/>
            <person name="Shatsman S."/>
            <person name="Geer K."/>
            <person name="Chen Y."/>
            <person name="Abramzon S."/>
            <person name="Nierman W.C."/>
            <person name="Havlak P.H."/>
            <person name="Chen R."/>
            <person name="Durbin K.J."/>
            <person name="Egan A."/>
            <person name="Ren Y."/>
            <person name="Song X.-Z."/>
            <person name="Li B."/>
            <person name="Liu Y."/>
            <person name="Qin X."/>
            <person name="Cawley S."/>
            <person name="Cooney A.J."/>
            <person name="D'Souza L.M."/>
            <person name="Martin K."/>
            <person name="Wu J.Q."/>
            <person name="Gonzalez-Garay M.L."/>
            <person name="Jackson A.R."/>
            <person name="Kalafus K.J."/>
            <person name="McLeod M.P."/>
            <person name="Milosavljevic A."/>
            <person name="Virk D."/>
            <person name="Volkov A."/>
            <person name="Wheeler D.A."/>
            <person name="Zhang Z."/>
            <person name="Bailey J.A."/>
            <person name="Eichler E.E."/>
            <person name="Tuzun E."/>
            <person name="Birney E."/>
            <person name="Mongin E."/>
            <person name="Ureta-Vidal A."/>
            <person name="Woodwark C."/>
            <person name="Zdobnov E."/>
            <person name="Bork P."/>
            <person name="Suyama M."/>
            <person name="Torrents D."/>
            <person name="Alexandersson M."/>
            <person name="Trask B.J."/>
            <person name="Young J.M."/>
            <person name="Huang H."/>
            <person name="Wang H."/>
            <person name="Xing H."/>
            <person name="Daniels S."/>
            <person name="Gietzen D."/>
            <person name="Schmidt J."/>
            <person name="Stevens K."/>
            <person name="Vitt U."/>
            <person name="Wingrove J."/>
            <person name="Camara F."/>
            <person name="Mar Alba M."/>
            <person name="Abril J.F."/>
            <person name="Guigo R."/>
            <person name="Smit A."/>
            <person name="Dubchak I."/>
            <person name="Rubin E.M."/>
            <person name="Couronne O."/>
            <person name="Poliakov A."/>
            <person name="Huebner N."/>
            <person name="Ganten D."/>
            <person name="Goesele C."/>
            <person name="Hummel O."/>
            <person name="Kreitler T."/>
            <person name="Lee Y.-A."/>
            <person name="Monti J."/>
            <person name="Schulz H."/>
            <person name="Zimdahl H."/>
            <person name="Himmelbauer H."/>
            <person name="Lehrach H."/>
            <person name="Jacob H.J."/>
            <person name="Bromberg S."/>
            <person name="Gullings-Handley J."/>
            <person name="Jensen-Seaman M.I."/>
            <person name="Kwitek A.E."/>
            <person name="Lazar J."/>
            <person name="Pasko D."/>
            <person name="Tonellato P.J."/>
            <person name="Twigger S."/>
            <person name="Ponting C.P."/>
            <person name="Duarte J.M."/>
            <person name="Rice S."/>
            <person name="Goodstadt L."/>
            <person name="Beatson S.A."/>
            <person name="Emes R.D."/>
            <person name="Winter E.E."/>
            <person name="Webber C."/>
            <person name="Brandt P."/>
            <person name="Nyakatura G."/>
            <person name="Adetobi M."/>
            <person name="Chiaromonte F."/>
            <person name="Elnitski L."/>
            <person name="Eswara P."/>
            <person name="Hardison R.C."/>
            <person name="Hou M."/>
            <person name="Kolbe D."/>
            <person name="Makova K."/>
            <person name="Miller W."/>
            <person name="Nekrutenko A."/>
            <person name="Riemer C."/>
            <person name="Schwartz S."/>
            <person name="Taylor J."/>
            <person name="Yang S."/>
            <person name="Zhang Y."/>
            <person name="Lindpaintner K."/>
            <person name="Andrews T.D."/>
            <person name="Caccamo M."/>
            <person name="Clamp M."/>
            <person name="Clarke L."/>
            <person name="Curwen V."/>
            <person name="Durbin R.M."/>
            <person name="Eyras E."/>
            <person name="Searle S.M."/>
            <person name="Cooper G.M."/>
            <person name="Batzoglou S."/>
            <person name="Brudno M."/>
            <person name="Sidow A."/>
            <person name="Stone E.A."/>
            <person name="Payseur B.A."/>
            <person name="Bourque G."/>
            <person name="Lopez-Otin C."/>
            <person name="Puente X.S."/>
            <person name="Chakrabarti K."/>
            <person name="Chatterji S."/>
            <person name="Dewey C."/>
            <person name="Pachter L."/>
            <person name="Bray N."/>
            <person name="Yap V.B."/>
            <person name="Caspi A."/>
            <person name="Tesler G."/>
            <person name="Pevzner P.A."/>
            <person name="Haussler D."/>
            <person name="Roskin K.M."/>
            <person name="Baertsch R."/>
            <person name="Clawson H."/>
            <person name="Furey T.S."/>
            <person name="Hinrichs A.S."/>
            <person name="Karolchik D."/>
            <person name="Kent W.J."/>
            <person name="Rosenbloom K.R."/>
            <person name="Trumbower H."/>
            <person name="Weirauch M."/>
            <person name="Cooper D.N."/>
            <person name="Stenson P.D."/>
            <person name="Ma B."/>
            <person name="Brent M."/>
            <person name="Arumugam M."/>
            <person name="Shteynberg D."/>
            <person name="Copley R.R."/>
            <person name="Taylor M.S."/>
            <person name="Riethman H."/>
            <person name="Mudunuri U."/>
            <person name="Peterson J."/>
            <person name="Guyer M."/>
            <person name="Felsenfeld A."/>
            <person name="Old S."/>
            <person name="Mockrin S."/>
            <person name="Collins F.S."/>
        </authorList>
    </citation>
    <scope>NUCLEOTIDE SEQUENCE [LARGE SCALE GENOMIC DNA]</scope>
    <source>
        <strain>Brown Norway</strain>
    </source>
</reference>
<reference key="2">
    <citation type="journal article" date="2011" name="Exp. Cell Res.">
        <title>Novel interactions of ankyrins-G at the costameres: the muscle-specific Obscurin/Titin-Binding-related Domain (OTBD) binds plectin and filamin C.</title>
        <authorList>
            <person name="Maiweilidan Y."/>
            <person name="Klauza I."/>
            <person name="Kordeli E."/>
        </authorList>
    </citation>
    <scope>INTERACTION WITH ANK3</scope>
</reference>
<reference key="3">
    <citation type="journal article" date="2012" name="Nat. Commun.">
        <title>Quantitative maps of protein phosphorylation sites across 14 different rat organs and tissues.</title>
        <authorList>
            <person name="Lundby A."/>
            <person name="Secher A."/>
            <person name="Lage K."/>
            <person name="Nordsborg N.B."/>
            <person name="Dmytriyev A."/>
            <person name="Lundby C."/>
            <person name="Olsen J.V."/>
        </authorList>
    </citation>
    <scope>PHOSPHORYLATION [LARGE SCALE ANALYSIS] AT SER-2234 AND SER-2237</scope>
    <scope>IDENTIFICATION BY MASS SPECTROMETRY [LARGE SCALE ANALYSIS]</scope>
</reference>